<evidence type="ECO:0000255" key="1"/>
<evidence type="ECO:0000255" key="2">
    <source>
        <dbReference type="PROSITE-ProRule" id="PRU00228"/>
    </source>
</evidence>
<evidence type="ECO:0000255" key="3">
    <source>
        <dbReference type="PROSITE-ProRule" id="PRU00508"/>
    </source>
</evidence>
<evidence type="ECO:0000255" key="4">
    <source>
        <dbReference type="PROSITE-ProRule" id="PRU01388"/>
    </source>
</evidence>
<evidence type="ECO:0000256" key="5">
    <source>
        <dbReference type="SAM" id="MobiDB-lite"/>
    </source>
</evidence>
<evidence type="ECO:0000269" key="6">
    <source>
    </source>
</evidence>
<evidence type="ECO:0000269" key="7">
    <source>
    </source>
</evidence>
<evidence type="ECO:0000269" key="8">
    <source>
    </source>
</evidence>
<evidence type="ECO:0000269" key="9">
    <source>
    </source>
</evidence>
<evidence type="ECO:0000269" key="10">
    <source>
    </source>
</evidence>
<evidence type="ECO:0000269" key="11">
    <source>
    </source>
</evidence>
<evidence type="ECO:0000269" key="12">
    <source>
    </source>
</evidence>
<evidence type="ECO:0000269" key="13">
    <source>
    </source>
</evidence>
<evidence type="ECO:0000269" key="14">
    <source>
    </source>
</evidence>
<evidence type="ECO:0000305" key="15"/>
<evidence type="ECO:0007744" key="16">
    <source>
    </source>
</evidence>
<organism>
    <name type="scientific">Arabidopsis thaliana</name>
    <name type="common">Mouse-ear cress</name>
    <dbReference type="NCBI Taxonomy" id="3702"/>
    <lineage>
        <taxon>Eukaryota</taxon>
        <taxon>Viridiplantae</taxon>
        <taxon>Streptophyta</taxon>
        <taxon>Embryophyta</taxon>
        <taxon>Tracheophyta</taxon>
        <taxon>Spermatophyta</taxon>
        <taxon>Magnoliopsida</taxon>
        <taxon>eudicotyledons</taxon>
        <taxon>Gunneridae</taxon>
        <taxon>Pentapetalae</taxon>
        <taxon>rosids</taxon>
        <taxon>malvids</taxon>
        <taxon>Brassicales</taxon>
        <taxon>Brassicaceae</taxon>
        <taxon>Camelineae</taxon>
        <taxon>Arabidopsis</taxon>
    </lineage>
</organism>
<dbReference type="EMBL" id="AF507018">
    <property type="protein sequence ID" value="AAM77595.1"/>
    <property type="status" value="ALT_SEQ"/>
    <property type="molecule type" value="Genomic_DNA"/>
</dbReference>
<dbReference type="EMBL" id="AC009755">
    <property type="protein sequence ID" value="AAF02112.1"/>
    <property type="status" value="ALT_SEQ"/>
    <property type="molecule type" value="Genomic_DNA"/>
</dbReference>
<dbReference type="EMBL" id="CP002686">
    <property type="protein sequence ID" value="AEE73785.1"/>
    <property type="molecule type" value="Genomic_DNA"/>
</dbReference>
<dbReference type="RefSeq" id="NP_186875.2">
    <property type="nucleotide sequence ID" value="NM_111093.2"/>
</dbReference>
<dbReference type="SMR" id="Q9SRU2"/>
<dbReference type="BioGRID" id="5732">
    <property type="interactions" value="3"/>
</dbReference>
<dbReference type="FunCoup" id="Q9SRU2">
    <property type="interactions" value="3565"/>
</dbReference>
<dbReference type="IntAct" id="Q9SRU2">
    <property type="interactions" value="1"/>
</dbReference>
<dbReference type="STRING" id="3702.Q9SRU2"/>
<dbReference type="GlyGen" id="Q9SRU2">
    <property type="glycosylation" value="2 sites"/>
</dbReference>
<dbReference type="iPTMnet" id="Q9SRU2"/>
<dbReference type="PaxDb" id="3702-AT3G02260.1"/>
<dbReference type="ProteomicsDB" id="240620"/>
<dbReference type="EnsemblPlants" id="AT3G02260.1">
    <property type="protein sequence ID" value="AT3G02260.1"/>
    <property type="gene ID" value="AT3G02260"/>
</dbReference>
<dbReference type="GeneID" id="820398"/>
<dbReference type="Gramene" id="AT3G02260.1">
    <property type="protein sequence ID" value="AT3G02260.1"/>
    <property type="gene ID" value="AT3G02260"/>
</dbReference>
<dbReference type="KEGG" id="ath:AT3G02260"/>
<dbReference type="Araport" id="AT3G02260"/>
<dbReference type="TAIR" id="AT3G02260">
    <property type="gene designation" value="BIG"/>
</dbReference>
<dbReference type="eggNOG" id="KOG1776">
    <property type="taxonomic scope" value="Eukaryota"/>
</dbReference>
<dbReference type="HOGENOM" id="CLU_223526_0_0_1"/>
<dbReference type="InParanoid" id="Q9SRU2"/>
<dbReference type="CD-CODE" id="4299E36E">
    <property type="entry name" value="Nucleolus"/>
</dbReference>
<dbReference type="PRO" id="PR:Q9SRU2"/>
<dbReference type="Proteomes" id="UP000006548">
    <property type="component" value="Chromosome 3"/>
</dbReference>
<dbReference type="ExpressionAtlas" id="Q9SRU2">
    <property type="expression patterns" value="baseline and differential"/>
</dbReference>
<dbReference type="GO" id="GO:0005829">
    <property type="term" value="C:cytosol"/>
    <property type="evidence" value="ECO:0007005"/>
    <property type="project" value="TAIR"/>
</dbReference>
<dbReference type="GO" id="GO:0016020">
    <property type="term" value="C:membrane"/>
    <property type="evidence" value="ECO:0007669"/>
    <property type="project" value="UniProtKB-SubCell"/>
</dbReference>
<dbReference type="GO" id="GO:0009506">
    <property type="term" value="C:plasmodesma"/>
    <property type="evidence" value="ECO:0007005"/>
    <property type="project" value="TAIR"/>
</dbReference>
<dbReference type="GO" id="GO:0008270">
    <property type="term" value="F:zinc ion binding"/>
    <property type="evidence" value="ECO:0007669"/>
    <property type="project" value="UniProtKB-KW"/>
</dbReference>
<dbReference type="GO" id="GO:0009926">
    <property type="term" value="P:auxin polar transport"/>
    <property type="evidence" value="ECO:0000314"/>
    <property type="project" value="TAIR"/>
</dbReference>
<dbReference type="GO" id="GO:0009734">
    <property type="term" value="P:auxin-activated signaling pathway"/>
    <property type="evidence" value="ECO:0007669"/>
    <property type="project" value="UniProtKB-KW"/>
</dbReference>
<dbReference type="GO" id="GO:0048281">
    <property type="term" value="P:inflorescence morphogenesis"/>
    <property type="evidence" value="ECO:0000315"/>
    <property type="project" value="UniProtKB"/>
</dbReference>
<dbReference type="GO" id="GO:0010311">
    <property type="term" value="P:lateral root formation"/>
    <property type="evidence" value="ECO:0000315"/>
    <property type="project" value="UniProtKB"/>
</dbReference>
<dbReference type="GO" id="GO:0009640">
    <property type="term" value="P:photomorphogenesis"/>
    <property type="evidence" value="ECO:0000315"/>
    <property type="project" value="TAIR"/>
</dbReference>
<dbReference type="GO" id="GO:0009733">
    <property type="term" value="P:response to auxin"/>
    <property type="evidence" value="ECO:0000315"/>
    <property type="project" value="TAIR"/>
</dbReference>
<dbReference type="GO" id="GO:0009620">
    <property type="term" value="P:response to fungus"/>
    <property type="evidence" value="ECO:0000315"/>
    <property type="project" value="UniProtKB"/>
</dbReference>
<dbReference type="GO" id="GO:0048364">
    <property type="term" value="P:root development"/>
    <property type="evidence" value="ECO:0000315"/>
    <property type="project" value="TAIR"/>
</dbReference>
<dbReference type="GO" id="GO:0009826">
    <property type="term" value="P:unidimensional cell growth"/>
    <property type="evidence" value="ECO:0000315"/>
    <property type="project" value="UniProtKB"/>
</dbReference>
<dbReference type="CDD" id="cd19681">
    <property type="entry name" value="UBR-box_BIG_like"/>
    <property type="match status" value="1"/>
</dbReference>
<dbReference type="CDD" id="cd02249">
    <property type="entry name" value="ZZ"/>
    <property type="match status" value="1"/>
</dbReference>
<dbReference type="FunFam" id="3.30.60.90:FF:000010">
    <property type="entry name" value="auxin transport protein BIG"/>
    <property type="match status" value="1"/>
</dbReference>
<dbReference type="Gene3D" id="3.30.60.90">
    <property type="match status" value="1"/>
</dbReference>
<dbReference type="Gene3D" id="1.25.10.10">
    <property type="entry name" value="Leucine-rich Repeat Variant"/>
    <property type="match status" value="1"/>
</dbReference>
<dbReference type="InterPro" id="IPR011989">
    <property type="entry name" value="ARM-like"/>
</dbReference>
<dbReference type="InterPro" id="IPR016024">
    <property type="entry name" value="ARM-type_fold"/>
</dbReference>
<dbReference type="InterPro" id="IPR025704">
    <property type="entry name" value="E3_Ub_ligase_UBR4_C"/>
</dbReference>
<dbReference type="InterPro" id="IPR045189">
    <property type="entry name" value="UBR4-like"/>
</dbReference>
<dbReference type="InterPro" id="IPR056530">
    <property type="entry name" value="UBR4-like_dom"/>
</dbReference>
<dbReference type="InterPro" id="IPR036322">
    <property type="entry name" value="WD40_repeat_dom_sf"/>
</dbReference>
<dbReference type="InterPro" id="IPR003126">
    <property type="entry name" value="Znf_UBR"/>
</dbReference>
<dbReference type="InterPro" id="IPR000433">
    <property type="entry name" value="Znf_ZZ"/>
</dbReference>
<dbReference type="InterPro" id="IPR043145">
    <property type="entry name" value="Znf_ZZ_sf"/>
</dbReference>
<dbReference type="PANTHER" id="PTHR21725">
    <property type="entry name" value="E3 UBIQUITIN-PROTEIN LIGASE UBR4"/>
    <property type="match status" value="1"/>
</dbReference>
<dbReference type="PANTHER" id="PTHR21725:SF1">
    <property type="entry name" value="E3 UBIQUITIN-PROTEIN LIGASE UBR4"/>
    <property type="match status" value="1"/>
</dbReference>
<dbReference type="Pfam" id="PF13764">
    <property type="entry name" value="E3_UbLigase_R4"/>
    <property type="match status" value="1"/>
</dbReference>
<dbReference type="Pfam" id="PF24079">
    <property type="entry name" value="UBR4"/>
    <property type="match status" value="1"/>
</dbReference>
<dbReference type="Pfam" id="PF00569">
    <property type="entry name" value="ZZ"/>
    <property type="match status" value="1"/>
</dbReference>
<dbReference type="SMART" id="SM00396">
    <property type="entry name" value="ZnF_UBR1"/>
    <property type="match status" value="1"/>
</dbReference>
<dbReference type="SMART" id="SM00291">
    <property type="entry name" value="ZnF_ZZ"/>
    <property type="match status" value="1"/>
</dbReference>
<dbReference type="SUPFAM" id="SSF48371">
    <property type="entry name" value="ARM repeat"/>
    <property type="match status" value="1"/>
</dbReference>
<dbReference type="SUPFAM" id="SSF57850">
    <property type="entry name" value="RING/U-box"/>
    <property type="match status" value="1"/>
</dbReference>
<dbReference type="SUPFAM" id="SSF50978">
    <property type="entry name" value="WD40 repeat-like"/>
    <property type="match status" value="1"/>
</dbReference>
<dbReference type="PROSITE" id="PS52043">
    <property type="entry name" value="UBR4_E3"/>
    <property type="match status" value="1"/>
</dbReference>
<dbReference type="PROSITE" id="PS51157">
    <property type="entry name" value="ZF_UBR"/>
    <property type="match status" value="1"/>
</dbReference>
<dbReference type="PROSITE" id="PS01357">
    <property type="entry name" value="ZF_ZZ_1"/>
    <property type="match status" value="1"/>
</dbReference>
<dbReference type="PROSITE" id="PS50135">
    <property type="entry name" value="ZF_ZZ_2"/>
    <property type="match status" value="1"/>
</dbReference>
<name>BIG_ARATH</name>
<keyword id="KW-0007">Acetylation</keyword>
<keyword id="KW-0927">Auxin signaling pathway</keyword>
<keyword id="KW-0175">Coiled coil</keyword>
<keyword id="KW-0217">Developmental protein</keyword>
<keyword id="KW-0472">Membrane</keyword>
<keyword id="KW-0479">Metal-binding</keyword>
<keyword id="KW-1185">Reference proteome</keyword>
<keyword id="KW-0812">Transmembrane</keyword>
<keyword id="KW-1133">Transmembrane helix</keyword>
<keyword id="KW-0862">Zinc</keyword>
<keyword id="KW-0863">Zinc-finger</keyword>
<reference key="1">
    <citation type="journal article" date="2001" name="Genes Dev.">
        <title>BIG: a calossin-like protein required for polar auxin transport in Arabidopsis.</title>
        <authorList>
            <person name="Gil P."/>
            <person name="Dewey E."/>
            <person name="Friml J."/>
            <person name="Zhao Y."/>
            <person name="Snowden K.C."/>
            <person name="Putterill J."/>
            <person name="Palme K."/>
            <person name="Estelle M."/>
            <person name="Chory J."/>
        </authorList>
    </citation>
    <scope>NUCLEOTIDE SEQUENCE [GENOMIC DNA]</scope>
    <scope>FUNCTION</scope>
    <scope>DISRUPTION PHENOTYPE</scope>
    <scope>MUTAGENESIS OF CYS-1607</scope>
    <scope>TISSUE SPECIFICITY</scope>
    <source>
        <strain>cv. Columbia</strain>
    </source>
</reference>
<reference key="2">
    <citation type="journal article" date="2000" name="Nature">
        <title>Sequence and analysis of chromosome 3 of the plant Arabidopsis thaliana.</title>
        <authorList>
            <person name="Salanoubat M."/>
            <person name="Lemcke K."/>
            <person name="Rieger M."/>
            <person name="Ansorge W."/>
            <person name="Unseld M."/>
            <person name="Fartmann B."/>
            <person name="Valle G."/>
            <person name="Bloecker H."/>
            <person name="Perez-Alonso M."/>
            <person name="Obermaier B."/>
            <person name="Delseny M."/>
            <person name="Boutry M."/>
            <person name="Grivell L.A."/>
            <person name="Mache R."/>
            <person name="Puigdomenech P."/>
            <person name="De Simone V."/>
            <person name="Choisne N."/>
            <person name="Artiguenave F."/>
            <person name="Robert C."/>
            <person name="Brottier P."/>
            <person name="Wincker P."/>
            <person name="Cattolico L."/>
            <person name="Weissenbach J."/>
            <person name="Saurin W."/>
            <person name="Quetier F."/>
            <person name="Schaefer M."/>
            <person name="Mueller-Auer S."/>
            <person name="Gabel C."/>
            <person name="Fuchs M."/>
            <person name="Benes V."/>
            <person name="Wurmbach E."/>
            <person name="Drzonek H."/>
            <person name="Erfle H."/>
            <person name="Jordan N."/>
            <person name="Bangert S."/>
            <person name="Wiedelmann R."/>
            <person name="Kranz H."/>
            <person name="Voss H."/>
            <person name="Holland R."/>
            <person name="Brandt P."/>
            <person name="Nyakatura G."/>
            <person name="Vezzi A."/>
            <person name="D'Angelo M."/>
            <person name="Pallavicini A."/>
            <person name="Toppo S."/>
            <person name="Simionati B."/>
            <person name="Conrad A."/>
            <person name="Hornischer K."/>
            <person name="Kauer G."/>
            <person name="Loehnert T.-H."/>
            <person name="Nordsiek G."/>
            <person name="Reichelt J."/>
            <person name="Scharfe M."/>
            <person name="Schoen O."/>
            <person name="Bargues M."/>
            <person name="Terol J."/>
            <person name="Climent J."/>
            <person name="Navarro P."/>
            <person name="Collado C."/>
            <person name="Perez-Perez A."/>
            <person name="Ottenwaelder B."/>
            <person name="Duchemin D."/>
            <person name="Cooke R."/>
            <person name="Laudie M."/>
            <person name="Berger-Llauro C."/>
            <person name="Purnelle B."/>
            <person name="Masuy D."/>
            <person name="de Haan M."/>
            <person name="Maarse A.C."/>
            <person name="Alcaraz J.-P."/>
            <person name="Cottet A."/>
            <person name="Casacuberta E."/>
            <person name="Monfort A."/>
            <person name="Argiriou A."/>
            <person name="Flores M."/>
            <person name="Liguori R."/>
            <person name="Vitale D."/>
            <person name="Mannhaupt G."/>
            <person name="Haase D."/>
            <person name="Schoof H."/>
            <person name="Rudd S."/>
            <person name="Zaccaria P."/>
            <person name="Mewes H.-W."/>
            <person name="Mayer K.F.X."/>
            <person name="Kaul S."/>
            <person name="Town C.D."/>
            <person name="Koo H.L."/>
            <person name="Tallon L.J."/>
            <person name="Jenkins J."/>
            <person name="Rooney T."/>
            <person name="Rizzo M."/>
            <person name="Walts A."/>
            <person name="Utterback T."/>
            <person name="Fujii C.Y."/>
            <person name="Shea T.P."/>
            <person name="Creasy T.H."/>
            <person name="Haas B."/>
            <person name="Maiti R."/>
            <person name="Wu D."/>
            <person name="Peterson J."/>
            <person name="Van Aken S."/>
            <person name="Pai G."/>
            <person name="Militscher J."/>
            <person name="Sellers P."/>
            <person name="Gill J.E."/>
            <person name="Feldblyum T.V."/>
            <person name="Preuss D."/>
            <person name="Lin X."/>
            <person name="Nierman W.C."/>
            <person name="Salzberg S.L."/>
            <person name="White O."/>
            <person name="Venter J.C."/>
            <person name="Fraser C.M."/>
            <person name="Kaneko T."/>
            <person name="Nakamura Y."/>
            <person name="Sato S."/>
            <person name="Kato T."/>
            <person name="Asamizu E."/>
            <person name="Sasamoto S."/>
            <person name="Kimura T."/>
            <person name="Idesawa K."/>
            <person name="Kawashima K."/>
            <person name="Kishida Y."/>
            <person name="Kiyokawa C."/>
            <person name="Kohara M."/>
            <person name="Matsumoto M."/>
            <person name="Matsuno A."/>
            <person name="Muraki A."/>
            <person name="Nakayama S."/>
            <person name="Nakazaki N."/>
            <person name="Shinpo S."/>
            <person name="Takeuchi C."/>
            <person name="Wada T."/>
            <person name="Watanabe A."/>
            <person name="Yamada M."/>
            <person name="Yasuda M."/>
            <person name="Tabata S."/>
        </authorList>
    </citation>
    <scope>NUCLEOTIDE SEQUENCE [LARGE SCALE GENOMIC DNA]</scope>
    <source>
        <strain>cv. Columbia</strain>
    </source>
</reference>
<reference key="3">
    <citation type="journal article" date="2017" name="Plant J.">
        <title>Araport11: a complete reannotation of the Arabidopsis thaliana reference genome.</title>
        <authorList>
            <person name="Cheng C.Y."/>
            <person name="Krishnakumar V."/>
            <person name="Chan A.P."/>
            <person name="Thibaud-Nissen F."/>
            <person name="Schobel S."/>
            <person name="Town C.D."/>
        </authorList>
    </citation>
    <scope>GENOME REANNOTATION</scope>
    <source>
        <strain>cv. Columbia</strain>
    </source>
</reference>
<reference key="4">
    <citation type="journal article" date="1994" name="Genes Dev.">
        <title>Arabidopsis mutants define downstream branches in the phototransduction pathway.</title>
        <authorList>
            <person name="Li H.-M."/>
            <person name="Altschmied L."/>
            <person name="Chory J."/>
        </authorList>
    </citation>
    <scope>FUNCTION</scope>
    <scope>DISRUPTION PHENOTYPE</scope>
    <source>
        <strain>cv. Columbia</strain>
    </source>
</reference>
<reference key="5">
    <citation type="journal article" date="1997" name="Plant Cell">
        <title>Reduced naphthylphthalamic acid binding in the tir3 mutant of Arabidopsis is associated with a reduction in polar auxin transport and diverse morphological defects.</title>
        <authorList>
            <person name="Ruegger M."/>
            <person name="Dewey E."/>
            <person name="Hobbie L."/>
            <person name="Brown D."/>
            <person name="Bernasconi P."/>
            <person name="Turner J."/>
            <person name="Muday G."/>
            <person name="Estelle M."/>
        </authorList>
    </citation>
    <scope>FUNCTION</scope>
    <scope>DISRUPTION PHENOTYPE</scope>
    <source>
        <strain>cv. Columbia</strain>
    </source>
</reference>
<reference key="6">
    <citation type="journal article" date="1997" name="Plant Physiol.">
        <title>Characterization of new gibberellin-responsive semidwarf mutants of arabidopsis.</title>
        <authorList>
            <person name="Sponsel V.M."/>
            <person name="Schmidt F.W."/>
            <person name="Porter S.G."/>
            <person name="Nakayama M."/>
            <person name="Kohlstruk S."/>
            <person name="Estelle M."/>
        </authorList>
    </citation>
    <scope>FUNCTION</scope>
    <scope>DISRUPTION PHENOTYPE</scope>
    <source>
        <strain>cv. Landsberg erecta</strain>
    </source>
</reference>
<reference key="7">
    <citation type="journal article" date="2001" name="Curr. Biol.">
        <title>Auxin transport: why plants like to think BIG.</title>
        <authorList>
            <person name="Luschnig C."/>
        </authorList>
    </citation>
    <scope>REVIEW</scope>
</reference>
<reference key="8">
    <citation type="journal article" date="2003" name="Plant J.">
        <title>Mutations in the huge Arabidopsis gene BIG affect a range of hormone and light responses.</title>
        <authorList>
            <person name="Kanyuka K."/>
            <person name="Praekelt U."/>
            <person name="Franklin K.A."/>
            <person name="Billingham O.E."/>
            <person name="Hooley R."/>
            <person name="Whitelam G.C."/>
            <person name="Halliday K.J."/>
        </authorList>
    </citation>
    <scope>FUNCTION</scope>
    <scope>DISRUPTION PHENOTYPE</scope>
    <source>
        <strain>cv. Columbia</strain>
    </source>
</reference>
<reference key="9">
    <citation type="journal article" date="2005" name="Plant J.">
        <title>The auxin transport inhibitor response 3 (tir3) allele of BIG and auxin transport inhibitors affect the gibberellin status of Arabidopsis.</title>
        <authorList>
            <person name="Desgagne-Penix I."/>
            <person name="Eakanunkul S."/>
            <person name="Coles J.P."/>
            <person name="Phillips A.L."/>
            <person name="Hedden P."/>
            <person name="Sponsel V.M."/>
        </authorList>
    </citation>
    <scope>FUNCTION</scope>
    <scope>DISRUPTION PHENOTYPE</scope>
    <source>
        <strain>cv. Columbia</strain>
        <strain>cv. Landsberg erecta</strain>
    </source>
</reference>
<reference key="10">
    <citation type="journal article" date="2005" name="Plant Physiol.">
        <title>An auxin transport independent pathway is involved in phosphate stress-induced root architectural alterations in Arabidopsis. Identification of BIG as a mediator of auxin in pericycle cell activation.</title>
        <authorList>
            <person name="Lopez-Bucio J."/>
            <person name="Hernandez-Abreu E."/>
            <person name="Sanchez-Calderon L."/>
            <person name="Perez-Torres A."/>
            <person name="Rampey R.A."/>
            <person name="Bartel B."/>
            <person name="Herrera-Estrella L."/>
        </authorList>
    </citation>
    <scope>FUNCTION</scope>
    <scope>DISRUPTION PHENOTYPE</scope>
    <source>
        <strain>cv. Columbia</strain>
        <strain>cv. Wassilewskija</strain>
    </source>
</reference>
<reference key="11">
    <citation type="journal article" date="2007" name="Plant Cell Physiol.">
        <title>CRM1/BIG-mediated auxin action regulates Arabidopsis inflorescence development.</title>
        <authorList>
            <person name="Yamaguchi N."/>
            <person name="Suzuki M."/>
            <person name="Fukaki H."/>
            <person name="Morita-Terao M."/>
            <person name="Tasaka M."/>
            <person name="Komeda Y."/>
        </authorList>
    </citation>
    <scope>FUNCTION</scope>
    <scope>DISRUPTION PHENOTYPE</scope>
    <scope>TISSUE SPECIFICITY</scope>
    <source>
        <strain>cv. Columbia</strain>
        <strain>cv. Landsberg erecta</strain>
    </source>
</reference>
<reference key="12">
    <citation type="journal article" date="2009" name="J. Proteomics">
        <title>Phosphoproteomic analysis of nuclei-enriched fractions from Arabidopsis thaliana.</title>
        <authorList>
            <person name="Jones A.M.E."/>
            <person name="MacLean D."/>
            <person name="Studholme D.J."/>
            <person name="Serna-Sanz A."/>
            <person name="Andreasson E."/>
            <person name="Rathjen J.P."/>
            <person name="Peck S.C."/>
        </authorList>
    </citation>
    <scope>IDENTIFICATION BY MASS SPECTROMETRY [LARGE SCALE ANALYSIS]</scope>
    <source>
        <strain>cv. Columbia</strain>
    </source>
</reference>
<reference key="13">
    <citation type="journal article" date="2009" name="Plant Physiol.">
        <title>Trichoderma virens, a plant beneficial fungus, enhances biomass production and promotes lateral root growth through an auxin-dependent mechanism in Arabidopsis.</title>
        <authorList>
            <person name="Contreras-Cornejo H.A."/>
            <person name="Macias-Rodriguez L."/>
            <person name="Cortes-Penagos C."/>
            <person name="Lopez-Bucio J."/>
        </authorList>
    </citation>
    <scope>FUNCTION</scope>
    <scope>DISRUPTION PHENOTYPE</scope>
</reference>
<reference key="14">
    <citation type="journal article" date="2012" name="Mol. Cell. Proteomics">
        <title>Comparative large-scale characterisation of plant vs. mammal proteins reveals similar and idiosyncratic N-alpha acetylation features.</title>
        <authorList>
            <person name="Bienvenut W.V."/>
            <person name="Sumpton D."/>
            <person name="Martinez A."/>
            <person name="Lilla S."/>
            <person name="Espagne C."/>
            <person name="Meinnel T."/>
            <person name="Giglione C."/>
        </authorList>
    </citation>
    <scope>ACETYLATION [LARGE SCALE ANALYSIS] AT ALA-2</scope>
    <scope>CLEAVAGE OF INITIATOR METHIONINE [LARGE SCALE ANALYSIS]</scope>
    <scope>IDENTIFICATION BY MASS SPECTROMETRY [LARGE SCALE ANALYSIS]</scope>
</reference>
<comment type="function">
    <text evidence="6 7 8 9 10 11 12 13 14">Required for auxin efflux and polar auxin transport (PAT) influencing auxin-mediated developmental responses (e.g. cell elongation, apical dominance, lateral root production, inflorescence architecture, general growth and development). Controls the elongation of the pedicels and stem internodes through auxin action. Involved in the expression modulation of light-regulated genes. Represses CAB1 and CAB3 genes expression in etiolated seedlings. Confers sensitivity to the auxin transport inhibitors N-1-naphthylphthalamic acid (NPA), 2-carboxyphenyl-3-phenylpropane-l,2-dione (CPD), and methyl-2-chloro-9-hydroxyfluorene-9-carboxylate (CFM). Influences the polarized subcellular distribution of the auxin transporter PIN1 in response to auxin transport inhibitors. Plays a role in the regulation of responses to phytohormones such as auxin, cytokinins, ethylene and gibberellic acid (GA), particularly during light-mediated stimuli (e.g. shade ovoidance, etiolation). Required for pericycle cell activation to form lateral root primordia (LRP) in both high and low phosphate P conditions. Necessary for the plant-growth promotion and lateral root development mediated by the fungus Trichoderma virens.</text>
</comment>
<comment type="subcellular location">
    <subcellularLocation>
        <location evidence="15">Membrane</location>
        <topology evidence="15">Multi-pass membrane protein</topology>
    </subcellularLocation>
</comment>
<comment type="tissue specificity">
    <text evidence="6 10">Constitutively expressed in roots, rosette leaves, inflorescence stems, and flowers. Present in inflorescence meristems, floral meristems and vascular tissues.</text>
</comment>
<comment type="disruption phenotype">
    <text evidence="6 7 8 9 10 11 12 13 14">Altered expression of light-regulated genes; overexpression of CAB (photosystem II type I chlorophyll a/b-binding proteins) genes in the dark (e.g. CAB1 and CAB3). Reduced auxin transport. Under long-day growth conditions (18 hr light/6 hr dark), reduced apical dominance in mature plants. Reduced plant growth under both short-day (9 hr light/15 hr dark) and long-day conditions resulting in shorter plants. Strong deficiency in lateral root production. Reduced cell elongation in siliques, pedicels, roots, and the inflorescence leading to a compact rosette, more secondary corymb-like inflorescence, and small seeds. Delayed flowering. Reduced sensitivity to auxin transport inhibitors N-1-naphthylphthalamic acid (NPA), 2-carboxyphenyl-3-phenylpropane-l,2-dione (CPD), and methyl-2-chloro-9-hydroxyfluorene-9-carboxylate (CFM). Organ-specific defect in response to cytokinins, ethylene and gibberellic acid (GA). Increased expression of auxin transporters PIN1 and PIN6. Reduced growth-promotion and lateral root development stimulation mediated by the fungus T.virens.</text>
</comment>
<comment type="miscellaneous">
    <text>May be or regulate a N-1-naphthylphthalamic acid (NPA) binding protein (NBP), an auxin transport inhibitor.</text>
</comment>
<comment type="similarity">
    <text evidence="15">Belongs to the UBR4 family.</text>
</comment>
<comment type="sequence caution" evidence="15">
    <conflict type="erroneous gene model prediction">
        <sequence resource="EMBL-CDS" id="AAF02112"/>
    </conflict>
</comment>
<comment type="sequence caution" evidence="15">
    <conflict type="erroneous gene model prediction">
        <sequence resource="EMBL-CDS" id="AAM77595"/>
    </conflict>
</comment>
<proteinExistence type="evidence at protein level"/>
<sequence>MADDLANLCRFLFDDTAFPSLSSSASSDLFSRRLRSDDSIKRGLRSFYLLLRWGVAPIGGDDADSSGKLRFETWSDSQLQALVSISQAILLLSRSLLGTDLTLNQGLVDQLEPIVLGVIQEVMEFSLSFLEKSSFRQNDLKMEINMEILLEIASFDGSEKQYDILPDFSPAEVAELWPAFSGEHDNMDAQSLVKCTFQGGRCSNEEKPVDRLLITLMSECIESDVQAQSVVKSPFQQDCGDLNPFTRHLAVVHLRCVCRLIMVCKELVQLPNMLDEKTVDQAVLDKLSFCLRILKLLGSLSKDVQSIENDGSLLQAVASFTDAFPKLFRVFFEFTNHTATEGNIESLSLALVEGFLNLVQLIFGKSSVFQNVQACVAASIVSNLDSSVWRYDGSSCNLTPPLAYFPRSVIYTLKLIQDLKRQPYHIHDLRVLESEVTYEDVSSTVDSVYFHLRQEKIPLLKCFTVEDIMRVIFPSSSQWMDNFFHLVYFLHREGVKLRPKVERTYSSLRSNSFAEVESQISHDDEALFGNLFSEGSRSLCSIEPNDQPPVSVSSNLLLQAAKELLNFLRACILCQEWVPSIYEDGCKKLDTGHIDILLNIVGCSIEDKASDGGCMLQDEGRPGHVAFELLLNLLRSRALSDFLESYLFQQILVVENSDFNYNDKTLALLAHTLLCRPGLAGAQLRAKIYDGFVSFVTERARGICAEALSLKELTACLPSAFHIEILLMAFHLSNEAEKAKFSNLIASCLHKVDTPAGICDGPQLSSWAMLISRLLVLLHHMLLHPNTCPTSLMLDLRSKLREVRSCGSNLHVTVGDHLSSWASLVARGITDSWAEDESVSHLMSQMIDFSPHPPTFQNDVSTAKTLNLDYGDLSASLCRVLGLWKGKKAGKVEDLLVERYIFMLSSDIARINCALDSQPSLHVNYQNVDISNSVDLISTSHLLVGDINVVGRNIELRNILIGVLNQLQAAPEQVVEDLGWDYIREGAWLSLLLYFLDGGVWDYCNKNSCSEIDPFWKECTSVDAKYVAAAEGVVSYLMKTGDIAELLRMLSSLVGKYLRVYKKAFLATFSDWNHHGHSSPSLLLLKHTQFGKSLQGEYAKIGDNSLHLQCIFYLSKLDSLGDGRGSGVLWKVFWEFMVHGFPTSLQTSSAILLSCILSIRCIVLTINGLLKLGNSKEKFGVDTSVLHQLLDSIMIIKFDQVFESFHGKCEEIHQNICAVLQLPDLTELFLMKDMEGFVRDISAEQIDRSQVLEGVITKIVDVMDSLSKDSSKSDIFKFYLGVDAVSEHTREFYELQRGDLSVFIDSLDYCSLEPVNIKVLNFLVDLLSVAQSPDLRRRVQQKFIDMDLISLSGWLERRLLGSFVEEIDGKKTAKGNSLPFREAAMNFINCLVSSTNDLQTRELQNHLFEALLISLDTAFLSFDIHMSMSYFHFVLQLAREDNLMKMVLKRTIMLMEKLAAEEKLLPGLKFIFGVIGTLLSNRSPSHGESLCGKSLASYKNTATGPLVPKLSGTTKKSDTLALPVDQEGSSISLECDVTSVDEDEDDGTSDGEVASLDKEDEEDANSERYLASKVCTFTSSGSNFMEQHWYFCYTCDLTVSKGCCSVCAKVCHRGHRVVYSRSSRFFCDCGAGGVRGSSCQCLKPRKYNGNGSAPARGTNNFQSFLPLSEDADQLGESDSDVEEDGFGEENHVVLYIPKETQYKMSLLLEELGIEDRVLELFSSLLPSITSKRDSGLSKEKQVNLGKDKVLSFDTDLLQLKKAYKSGSLDLKIKADYTNSKDLKSLLANGSLVKSLLSVSVRGRLAVGEGDKVAIFDVGQLIGQATIAPINADKANVKPLSRNIVRFEIVHLSFNPVVENYLAVAGLEDCQILTLNHRGEVIDRLAVELALQGAFIRRIDWVPGSQVQLMVVTNKFVKIYDLSQDSISPTQYFTLPNDMIVDATLFVASRGRVFLLVLSEQGNLYRFELSWGGNAGATPLKEIVQIMGKDVTGKGSSVYFSPTYRLLFISYHDGSSFMGRLSSDATSLTDTSGMFEEESDCKQRVAGLHRWKELLAGSGLFICFSSVKSNAVLAVSLRGDGVCAQNLRHPTGSSSPMVGITAYKPLSKDNVHCLVLHDDGSLQIYSHVRSGVDTDSNFTAEKVKKLGSKILNNKTYAGAKPEFPLDFFERAFCITADVRLGSDAIRNGDSEGAKQSLASEDGFIESPSPVGFKISVSNPNPDIVMVGIRMHVGTTSASSIPSEVTIFQRSIKMDEGMRCWYDIPFTVAESLLADEDVVISVGPTTSGTALPRIDSLEVYGRAKDEFGWKEKMDAVLDMEARVLGHGLLLPGSSKKRALAQSASMEEQVIADGLKLLSIYYSVCRPRQEVVLSELKCKQLLETIFESDRETLLQTTACRVLQSVFPRKEIYYQVMFLPNSVKDTMRLLGVVKVTSILSSRLGILGTGGSIVEEFNAQMRAVSKVALTRKSNFSVFLEMNGSEVVDNLMQVLWGILESEPLDTPTMNNVVMSSVELIYSYAECLASQGKDTGVHSVAPAVQLLKALMLFPNESVQTSSRCVLVLAISSRLLQVPFPKQTMLTTDDLVDNVTTPSVPIRTAGGNTHVMIEEDSITSSVQYCCDGCSTVPILRRRWHCTVCPDFDLCEACYEVLDADRLPPPHTRDHPMTAIPIEVESLGADTNEIQFSADEVGISNMLPVVTSSIPQASTPSIHVLEPGESAEFSASLTDPISISASKRAVNSLILSEFLQELSGWMETVSGVQAIPVMQLFYRLSSAIGGAFMDSSKPEEISLDKLIKWLLGEINLSKPFAASTRSSLGEIVILVFMFFTLMLRSWHQPGSDGSSSKLGGSTDVHDRRIVQSSTVVATQSSLHVQERDDFASQLVRACSCLRNQEFVNYLMNILQQLVHVFKSRAANVEARGSSSGSGCGAMLTVRRDLPAGNYSPFFSDSYAKAHRADIFVDYHRLLLENVFRLVYTLVRPEKQEKMGEKEKVYRNASSKDLKLDGFQDVLCSYINNPHTAFVRRYARRLFLHLCGSKTQYYSVRDSWQFSNEVKNLYKHVEKSGGFENNVSYERSVKIVKSLSTIAEVAVARPRNWQKYCLRHGDFLSFLLNGVFHFAEESVIQTLKLLNLAFYQGKDVSSSVQKAEATEVVTGSNRSGSQSVDSKKKKKGEDGHDSGLEKLYVDMEGVVDIFSANCGDLLRQFIDFFLLEWNSSSVRTEAKSVIYGLWHHGRHSFKESLLAALLQKVRYLPAYGQNIVEYTELVSLLLDKAPENNSKQAINELVDRCLNPDVIRCFFETLHSQNELIANHPNSRIYSTLGNLVEFDGYYLESEPCVACSSPDVPYSKMKLESLKSETKFTDNRIIVKCTGSYTIQSVTMNVHDARKSKSVKVLNLYYNNRPVSDLSELKNNWSLWKRAKSCHLSFNQTELKVEFPIPITACNFMIELDSFYENLQALSLEPLQCPRCSRPVTDKHGICSNCHENAYQCRQCRNINYENLDSFLCNECGYSKYGRFEFNFMAKPSFIFDNMENDEDMKKGLAAIESESENAHKRYQQLLGFKKPLLKIVSSIGETEMDSQHKDTVQQMMASLPGPSCKINRKIALLGVLYGEKCKAAFDSVSKSVQTLQGLRRVLMSYLHQKNSNFSSGASRCVVSKTPNNCYGCATTFVTQCLEILQVLSKHPRSRKQLVAAGILSELFENNIHQGPKTARAQARAALSTFSEGDLSAVNELNNLVQKKIMYCLEHHRSMDIALATREEMLLLSEVCSLTDEFWESRLRLVFQLLFSSIKLGAKHPAISEHIILPCLKIISVACTPPKPDTAEKEQTMGKSAPAVQEKDENAAGVIKYSSESEENNLNVSQKTRDIQLVSYLEWEKGASYLDFVRRQYKASQSIRGASQKSRTHRSDFLALKYTLRWKRRSSRTSKGGLQAFELGSWVTELILSACSQSIRSEMCTLISLLAAQSSPRRYRLINLLIGLLPATLAAGESSAEYFELLFKMIETQDALLFLTVRGCLTTICKLISQEVGNIESLERSLQIDISQGFTLHKLLELLGKFLEVPNIRSRFMRDNLLSHVLEALIVIRGLIVQKTKLINDCNRRLKDLLDGLLLESSENKRQFIRACVSGLQTHAEENKGRTCLFILEQLCNLICPSKPEAVYMLILNKSHTQEEFIRGSMTKNPYSSAEIGPLMRDVKNKICQQLDLLGLLEDDYGMELLVAGNIISLDLSIAQVYELVWKKSNQSSTSLTNSALLASNAAPSRDCPPMTVTYRLQGLDGEATEPMIKELEEDREESQDPEIEFAIAGAVREYGGLEILLDMIKSLQDDFKSNQEEMVAVLDLLNHCCKIRENRRALLRLGALSLLLETARRAFSVDAMEPAEGILLIVESLTLEANESDSISAAQSALTVSNEETGTWEQAKKIVLMFLERLSHPSGLKKSNKQQRNTEMVARILPYLTYGEPAAMEALIEHFSPYLQNWSEFDQLQQRHEEDPKDDSIAQQAAKQRFTVENFVRVSESLKTSSCGERLKDIVLENGIIAVAVKHIKEIFAITGQTGFKSSKEWLLALKLPSVPLILSMLRGLSMGHLPTQTCIDEGGILTLLHALEGVSGENDIGARAENLLDTLADKEGKGDGFLGEKVRALRDATKDEMRRRALRKREELLQGLGMRQELSSDGGERIVVSQPILEGFEDVEEEEDGLACMVCREGYKLRPSDLLGVYSYSKRVNLGVGNSGSARGECVYTTVSYFNIIHFQCHQEAKRADAALKNPKKEWEGAMLRNNESLCNSLFPVKGPSVPLAQYLRYVDQYWDNLNALGRADGSRLRLLTYDIVLMLARFATGASFSADCRGGGRDSNSRFLPFMFQMARHLLDQGGPVQRTNMARSVSSYISSSSTSTATAPSSDSRPLTPGSQLSSTGTEETVQFMMVNSLLSESYESWLQHRRVFLQRGIYHTFMQHAHGRVASRAAEPTSSGGKTQDAETLTGDELLSIVKPMLVYTGMIEQLQQLFKPKKPVHIEPIKKEGTSSGVELEPWEIVMKEKLLNVKEMIGFSKELISWLDEINSATDLQEAFDIVGVLADVLSEGVTQCDQFVRSAIDKD</sequence>
<protein>
    <recommendedName>
        <fullName>Auxin transport protein BIG</fullName>
    </recommendedName>
    <alternativeName>
        <fullName>Protein ATTENUATED SHADE AVOIDANCE 1</fullName>
    </alternativeName>
    <alternativeName>
        <fullName>Protein CORYMBOSA1</fullName>
    </alternativeName>
    <alternativeName>
        <fullName>Protein DARK OVER-EXPRESSION OF CAB 1</fullName>
    </alternativeName>
    <alternativeName>
        <fullName>Protein LOW PHOSPHATE-RESISTANT ROOT 1</fullName>
    </alternativeName>
    <alternativeName>
        <fullName>Protein TRANSPORT INHIBITOR RESPONSE 3</fullName>
    </alternativeName>
    <alternativeName>
        <fullName>Protein UMBRELLA 1</fullName>
    </alternativeName>
</protein>
<gene>
    <name type="primary">BIG</name>
    <name type="synonym">ASA1</name>
    <name type="synonym">CRM1</name>
    <name type="synonym">DOC1</name>
    <name type="synonym">GA6</name>
    <name type="synonym">LPR1</name>
    <name type="synonym">TIR3</name>
    <name type="synonym">UMB1</name>
    <name type="ordered locus">At3g02260</name>
    <name type="ORF">F14P3.9</name>
</gene>
<accession>Q9SRU2</accession>
<accession>F4J4S0</accession>
<feature type="initiator methionine" description="Removed" evidence="16">
    <location>
        <position position="1"/>
    </location>
</feature>
<feature type="chain" id="PRO_0000410727" description="Auxin transport protein BIG">
    <location>
        <begin position="2"/>
        <end position="5098"/>
    </location>
</feature>
<feature type="transmembrane region" description="Helical" evidence="1">
    <location>
        <begin position="1150"/>
        <end position="1170"/>
    </location>
</feature>
<feature type="transmembrane region" description="Helical" evidence="1">
    <location>
        <begin position="1458"/>
        <end position="1478"/>
    </location>
</feature>
<feature type="transmembrane region" description="Helical" evidence="1">
    <location>
        <begin position="2813"/>
        <end position="2833"/>
    </location>
</feature>
<feature type="domain" description="UZI" evidence="4">
    <location>
        <begin position="4820"/>
        <end position="5098"/>
    </location>
</feature>
<feature type="zinc finger region" description="UBR-type" evidence="3">
    <location>
        <begin position="1573"/>
        <end position="1644"/>
    </location>
</feature>
<feature type="zinc finger region" description="ZZ-type" evidence="2">
    <location>
        <begin position="2613"/>
        <end position="2672"/>
    </location>
</feature>
<feature type="zinc finger region" description="MYND-type; degenerate">
    <location>
        <begin position="3464"/>
        <end position="3504"/>
    </location>
</feature>
<feature type="zinc finger region" description="HemiRING-type" evidence="4">
    <location>
        <begin position="4698"/>
        <end position="4817"/>
    </location>
</feature>
<feature type="region of interest" description="Disordered" evidence="5">
    <location>
        <begin position="1539"/>
        <end position="1562"/>
    </location>
</feature>
<feature type="region of interest" description="Disordered" evidence="5">
    <location>
        <begin position="3149"/>
        <end position="3174"/>
    </location>
</feature>
<feature type="region of interest" description="UBR4 E3 catalytic module" evidence="4">
    <location>
        <begin position="4569"/>
        <end position="5098"/>
    </location>
</feature>
<feature type="region of interest" description="Disordered" evidence="5">
    <location>
        <begin position="4891"/>
        <end position="4915"/>
    </location>
</feature>
<feature type="coiled-coil region" evidence="1">
    <location>
        <begin position="3537"/>
        <end position="3557"/>
    </location>
</feature>
<feature type="coiled-coil region" evidence="1">
    <location>
        <begin position="4313"/>
        <end position="4333"/>
    </location>
</feature>
<feature type="compositionally biased region" description="Acidic residues" evidence="5">
    <location>
        <begin position="1539"/>
        <end position="1549"/>
    </location>
</feature>
<feature type="compositionally biased region" description="Polar residues" evidence="5">
    <location>
        <begin position="3151"/>
        <end position="3162"/>
    </location>
</feature>
<feature type="compositionally biased region" description="Low complexity" evidence="5">
    <location>
        <begin position="4891"/>
        <end position="4903"/>
    </location>
</feature>
<feature type="binding site" evidence="2">
    <location>
        <position position="2618"/>
    </location>
    <ligand>
        <name>Zn(2+)</name>
        <dbReference type="ChEBI" id="CHEBI:29105"/>
        <label>1</label>
    </ligand>
</feature>
<feature type="binding site" evidence="2">
    <location>
        <position position="2621"/>
    </location>
    <ligand>
        <name>Zn(2+)</name>
        <dbReference type="ChEBI" id="CHEBI:29105"/>
        <label>1</label>
    </ligand>
</feature>
<feature type="binding site" evidence="2">
    <location>
        <position position="2633"/>
    </location>
    <ligand>
        <name>Zn(2+)</name>
        <dbReference type="ChEBI" id="CHEBI:29105"/>
        <label>2</label>
    </ligand>
</feature>
<feature type="binding site" evidence="2">
    <location>
        <position position="2636"/>
    </location>
    <ligand>
        <name>Zn(2+)</name>
        <dbReference type="ChEBI" id="CHEBI:29105"/>
        <label>2</label>
    </ligand>
</feature>
<feature type="binding site" evidence="2">
    <location>
        <position position="2642"/>
    </location>
    <ligand>
        <name>Zn(2+)</name>
        <dbReference type="ChEBI" id="CHEBI:29105"/>
        <label>1</label>
    </ligand>
</feature>
<feature type="binding site" evidence="2">
    <location>
        <position position="2645"/>
    </location>
    <ligand>
        <name>Zn(2+)</name>
        <dbReference type="ChEBI" id="CHEBI:29105"/>
        <label>1</label>
    </ligand>
</feature>
<feature type="binding site" evidence="2">
    <location>
        <position position="2658"/>
    </location>
    <ligand>
        <name>Zn(2+)</name>
        <dbReference type="ChEBI" id="CHEBI:29105"/>
        <label>2</label>
    </ligand>
</feature>
<feature type="binding site" evidence="2">
    <location>
        <position position="2662"/>
    </location>
    <ligand>
        <name>Zn(2+)</name>
        <dbReference type="ChEBI" id="CHEBI:29105"/>
        <label>2</label>
    </ligand>
</feature>
<feature type="binding site" evidence="4">
    <location>
        <position position="4701"/>
    </location>
    <ligand>
        <name>Zn(2+)</name>
        <dbReference type="ChEBI" id="CHEBI:29105"/>
        <label>3</label>
    </ligand>
</feature>
<feature type="binding site" evidence="4">
    <location>
        <position position="4704"/>
    </location>
    <ligand>
        <name>Zn(2+)</name>
        <dbReference type="ChEBI" id="CHEBI:29105"/>
        <label>3</label>
    </ligand>
</feature>
<feature type="binding site" evidence="4">
    <location>
        <position position="4751"/>
    </location>
    <ligand>
        <name>Zn(2+)</name>
        <dbReference type="ChEBI" id="CHEBI:29105"/>
        <label>3</label>
    </ligand>
</feature>
<feature type="binding site" evidence="4">
    <location>
        <position position="4754"/>
    </location>
    <ligand>
        <name>Zn(2+)</name>
        <dbReference type="ChEBI" id="CHEBI:29105"/>
        <label>3</label>
    </ligand>
</feature>
<feature type="modified residue" description="N-acetylalanine" evidence="16">
    <location>
        <position position="2"/>
    </location>
</feature>
<feature type="mutagenesis site" description="In doc1-1; altered expression of multiple light-regulated genes." evidence="6">
    <original>C</original>
    <variation>Y</variation>
    <location>
        <position position="1607"/>
    </location>
</feature>